<protein>
    <recommendedName>
        <fullName evidence="1 10">L-Rhamnulokinase</fullName>
        <shortName evidence="1 10">RhaB</shortName>
        <shortName evidence="9">RhuK</shortName>
        <ecNumber evidence="1 3 5">2.7.1.5</ecNumber>
    </recommendedName>
    <alternativeName>
        <fullName evidence="1 8">ATP:L-rhamnulose phosphotransferase</fullName>
    </alternativeName>
    <alternativeName>
        <fullName evidence="1 9">L-rhamnulose 1-kinase</fullName>
    </alternativeName>
    <alternativeName>
        <fullName evidence="1 10">Rhamnulose kinase</fullName>
    </alternativeName>
</protein>
<reference key="1">
    <citation type="journal article" date="1993" name="J. Bacteriol.">
        <title>Sequencing and characterization of a gene cluster encoding the enzymes for L-rhamnose metabolism in Escherichia coli.</title>
        <authorList>
            <person name="Moralejo P."/>
            <person name="Egan S.M."/>
            <person name="Hidalgo E.F."/>
            <person name="Aguilar J."/>
        </authorList>
    </citation>
    <scope>NUCLEOTIDE SEQUENCE [GENOMIC DNA]</scope>
    <source>
        <strain>K12</strain>
    </source>
</reference>
<reference key="2">
    <citation type="journal article" date="1993" name="Nucleic Acids Res.">
        <title>Analysis of the Escherichia coli genome. III. DNA sequence of the region from 87.2 to 89.2 minutes.</title>
        <authorList>
            <person name="Plunkett G. III"/>
            <person name="Burland V."/>
            <person name="Daniels D.L."/>
            <person name="Blattner F.R."/>
        </authorList>
    </citation>
    <scope>NUCLEOTIDE SEQUENCE [LARGE SCALE GENOMIC DNA]</scope>
    <source>
        <strain>K12 / MG1655 / ATCC 47076</strain>
    </source>
</reference>
<reference key="3">
    <citation type="journal article" date="1997" name="Science">
        <title>The complete genome sequence of Escherichia coli K-12.</title>
        <authorList>
            <person name="Blattner F.R."/>
            <person name="Plunkett G. III"/>
            <person name="Bloch C.A."/>
            <person name="Perna N.T."/>
            <person name="Burland V."/>
            <person name="Riley M."/>
            <person name="Collado-Vides J."/>
            <person name="Glasner J.D."/>
            <person name="Rode C.K."/>
            <person name="Mayhew G.F."/>
            <person name="Gregor J."/>
            <person name="Davis N.W."/>
            <person name="Kirkpatrick H.A."/>
            <person name="Goeden M.A."/>
            <person name="Rose D.J."/>
            <person name="Mau B."/>
            <person name="Shao Y."/>
        </authorList>
    </citation>
    <scope>NUCLEOTIDE SEQUENCE [LARGE SCALE GENOMIC DNA]</scope>
    <source>
        <strain>K12 / MG1655 / ATCC 47076</strain>
    </source>
</reference>
<reference key="4">
    <citation type="journal article" date="2006" name="Mol. Syst. Biol.">
        <title>Highly accurate genome sequences of Escherichia coli K-12 strains MG1655 and W3110.</title>
        <authorList>
            <person name="Hayashi K."/>
            <person name="Morooka N."/>
            <person name="Yamamoto Y."/>
            <person name="Fujita K."/>
            <person name="Isono K."/>
            <person name="Choi S."/>
            <person name="Ohtsubo E."/>
            <person name="Baba T."/>
            <person name="Wanner B.L."/>
            <person name="Mori H."/>
            <person name="Horiuchi T."/>
        </authorList>
    </citation>
    <scope>NUCLEOTIDE SEQUENCE [LARGE SCALE GENOMIC DNA]</scope>
    <source>
        <strain>K12 / W3110 / ATCC 27325 / DSM 5911</strain>
    </source>
</reference>
<reference key="5">
    <citation type="journal article" date="1964" name="Biochim. Biophys. Acta">
        <title>The purification and properties of L-rhamnulokinase.</title>
        <authorList>
            <person name="Chiu T.H."/>
            <person name="Feingold D.S."/>
        </authorList>
    </citation>
    <scope>FUNCTION</scope>
    <scope>CATALYTIC ACTIVITY</scope>
    <scope>BIOPHYSICOCHEMICAL PROPERTIES</scope>
    <scope>SUBSTRATE SPECIFICITY</scope>
    <scope>COFACTOR</scope>
</reference>
<reference key="6">
    <citation type="journal article" date="1967" name="Genetics">
        <title>The L-rhamnose genetic system in Escherichia coli K-12.</title>
        <authorList>
            <person name="Power J."/>
        </authorList>
    </citation>
    <scope>FUNCTION</scope>
    <scope>DISRUPTION PHENOTYPE</scope>
    <source>
        <strain>K12</strain>
    </source>
</reference>
<reference key="7">
    <citation type="journal article" date="1991" name="J. Bacteriol.">
        <title>L-lyxose metabolism employs the L-rhamnose pathway in mutant cells of Escherichia coli adapted to grow on L-lyxose.</title>
        <authorList>
            <person name="Badia J."/>
            <person name="Gimenez R."/>
            <person name="Baldoma L."/>
            <person name="Barnes E."/>
            <person name="Fessner W.D."/>
            <person name="Aguilar J."/>
        </authorList>
    </citation>
    <scope>INDUCTION</scope>
    <source>
        <strain>K12</strain>
    </source>
</reference>
<reference key="8">
    <citation type="journal article" date="1993" name="J. Mol. Biol.">
        <title>A regulatory cascade in the induction of rhaBAD.</title>
        <authorList>
            <person name="Egan S.M."/>
            <person name="Schleif R.F."/>
        </authorList>
    </citation>
    <scope>INDUCTION</scope>
    <source>
        <strain>ECL116</strain>
    </source>
</reference>
<reference key="9">
    <citation type="journal article" date="2000" name="J. Bacteriol.">
        <title>Roles of cyclic AMP receptor protein and the carboxyl-terminal domain of the alpha subunit in transcription activation of the Escherichia coli rhaBAD operon.</title>
        <authorList>
            <person name="Holcroft C.C."/>
            <person name="Egan S.M."/>
        </authorList>
    </citation>
    <scope>INDUCTION</scope>
</reference>
<reference key="10">
    <citation type="journal article" date="2006" name="J. Mol. Biol.">
        <title>Structure and reaction mechanism of L-rhamnulose kinase from Escherichia coli.</title>
        <authorList>
            <person name="Grueninger D."/>
            <person name="Schulz G.E."/>
        </authorList>
    </citation>
    <scope>X-RAY CRYSTALLOGRAPHY (1.88 ANGSTROMS) IN COMPLEX WITH ADP AND FRUCTOSE</scope>
    <scope>FUNCTION</scope>
    <scope>CATALYTIC ACTIVITY</scope>
    <scope>BIOPHYSICOCHEMICAL PROPERTIES</scope>
    <scope>MUTAGENESIS OF GLU-69; GLU-70 AND ARG-73</scope>
    <scope>ACTIVE SITE</scope>
    <scope>SUBUNIT</scope>
    <scope>REACTION MECHANISM</scope>
    <scope>DISULFIDE BOND</scope>
</reference>
<name>RHAB_ECOLI</name>
<accession>P32171</accession>
<accession>Q2M8K1</accession>
<evidence type="ECO:0000255" key="1">
    <source>
        <dbReference type="HAMAP-Rule" id="MF_01535"/>
    </source>
</evidence>
<evidence type="ECO:0000269" key="2">
    <source>
    </source>
</evidence>
<evidence type="ECO:0000269" key="3">
    <source>
    </source>
</evidence>
<evidence type="ECO:0000269" key="4">
    <source>
    </source>
</evidence>
<evidence type="ECO:0000269" key="5">
    <source>
    </source>
</evidence>
<evidence type="ECO:0000269" key="6">
    <source>
    </source>
</evidence>
<evidence type="ECO:0000269" key="7">
    <source>
    </source>
</evidence>
<evidence type="ECO:0000303" key="8">
    <source>
    </source>
</evidence>
<evidence type="ECO:0000303" key="9">
    <source>
    </source>
</evidence>
<evidence type="ECO:0000303" key="10">
    <source>
    </source>
</evidence>
<evidence type="ECO:0000305" key="11"/>
<evidence type="ECO:0007829" key="12">
    <source>
        <dbReference type="PDB" id="2CGJ"/>
    </source>
</evidence>
<evidence type="ECO:0007829" key="13">
    <source>
        <dbReference type="PDB" id="2CGK"/>
    </source>
</evidence>
<evidence type="ECO:0007829" key="14">
    <source>
        <dbReference type="PDB" id="2CGL"/>
    </source>
</evidence>
<sequence>MTFRNCVAVDLGASSGRVMLARYERECRSLTLREIHRFNNGLHSQNGYVTWDVDSLESAIRLGLNKVCEEGIRIDSIGIDTWGVDFVLLDQQGQRVGLPVAYRDSRTNGLMAQAQQQLGKRDIYQRSGIQFLPFNTLYQLRALTEQQPELIPHIAHALLMPDYFSYRLTGKMNWEYTNATTTQLVNINSDDWDESLLAWSGANKAWFGRPTHPGNVIGHWICPQGNEIPVVAVASHDTASAVIASPLNGSRAAYLSSGTWSLMGFESQTPFTNDTALAANITNEGGAEGRYRVLKNIMGLWLLQRVLQEQQINDLPALISATQALPACRFIINPNDDRFINPETMCSEIQAACRETAQPIPESDAELARCIFDSLALLYADVLHELAQLRGEDFSQLHIVGGGCQNTLLNQLCADACGIRVIAGPVEASTLGNIGIQLMTLDELNNVDDFRQVVSTTANLTTFTPNPDSEIAHYVAQIHSTRQTKELCA</sequence>
<feature type="chain" id="PRO_0000090531" description="L-Rhamnulokinase">
    <location>
        <begin position="1"/>
        <end position="489"/>
    </location>
</feature>
<feature type="active site" description="Proton acceptor" evidence="1 5">
    <location>
        <position position="237"/>
    </location>
</feature>
<feature type="binding site" evidence="1 5">
    <location>
        <begin position="13"/>
        <end position="17"/>
    </location>
    <ligand>
        <name>ATP</name>
        <dbReference type="ChEBI" id="CHEBI:30616"/>
    </ligand>
</feature>
<feature type="binding site" evidence="1 5">
    <location>
        <position position="83"/>
    </location>
    <ligand>
        <name>substrate</name>
    </ligand>
</feature>
<feature type="binding site" evidence="1 5">
    <location>
        <begin position="236"/>
        <end position="238"/>
    </location>
    <ligand>
        <name>substrate</name>
    </ligand>
</feature>
<feature type="binding site" evidence="1 5">
    <location>
        <position position="259"/>
    </location>
    <ligand>
        <name>ATP</name>
        <dbReference type="ChEBI" id="CHEBI:30616"/>
    </ligand>
</feature>
<feature type="binding site" evidence="1 5">
    <location>
        <position position="296"/>
    </location>
    <ligand>
        <name>substrate</name>
    </ligand>
</feature>
<feature type="binding site" evidence="1 5">
    <location>
        <position position="304"/>
    </location>
    <ligand>
        <name>ATP</name>
        <dbReference type="ChEBI" id="CHEBI:30616"/>
    </ligand>
</feature>
<feature type="binding site" evidence="1 5">
    <location>
        <position position="402"/>
    </location>
    <ligand>
        <name>ATP</name>
        <dbReference type="ChEBI" id="CHEBI:30616"/>
    </ligand>
</feature>
<feature type="disulfide bond" evidence="1 5">
    <location>
        <begin position="68"/>
        <end position="222"/>
    </location>
</feature>
<feature type="disulfide bond" evidence="1 5">
    <location>
        <begin position="353"/>
        <end position="370"/>
    </location>
</feature>
<feature type="disulfide bond" evidence="1">
    <location>
        <begin position="413"/>
        <end position="417"/>
    </location>
</feature>
<feature type="mutagenesis site" description="Same kinase activity as the wild-type; when associated with A-70 and A-73." evidence="5">
    <original>E</original>
    <variation>A</variation>
    <location>
        <position position="69"/>
    </location>
</feature>
<feature type="mutagenesis site" description="Same kinase activity as the wild-type; when associated with A-69 and A-73." evidence="5">
    <original>E</original>
    <variation>A</variation>
    <location>
        <position position="70"/>
    </location>
</feature>
<feature type="mutagenesis site" description="Same kinase activity as the wild-type; when associated with A-69 and A-70." evidence="5">
    <original>R</original>
    <variation>A</variation>
    <location>
        <position position="73"/>
    </location>
</feature>
<feature type="sequence conflict" description="In Ref. 1; CAA43001." evidence="11" ref="1">
    <location>
        <position position="214"/>
    </location>
</feature>
<feature type="sequence conflict" description="In Ref. 1; CAA43001." evidence="11" ref="1">
    <original>QL</original>
    <variation>HV</variation>
    <location>
        <begin position="388"/>
        <end position="389"/>
    </location>
</feature>
<feature type="strand" evidence="14">
    <location>
        <begin position="4"/>
        <end position="11"/>
    </location>
</feature>
<feature type="strand" evidence="14">
    <location>
        <begin position="13"/>
        <end position="24"/>
    </location>
</feature>
<feature type="turn" evidence="14">
    <location>
        <begin position="25"/>
        <end position="28"/>
    </location>
</feature>
<feature type="strand" evidence="14">
    <location>
        <begin position="29"/>
        <end position="39"/>
    </location>
</feature>
<feature type="strand" evidence="14">
    <location>
        <begin position="43"/>
        <end position="45"/>
    </location>
</feature>
<feature type="strand" evidence="14">
    <location>
        <begin position="48"/>
        <end position="50"/>
    </location>
</feature>
<feature type="helix" evidence="14">
    <location>
        <begin position="53"/>
        <end position="69"/>
    </location>
</feature>
<feature type="strand" evidence="14">
    <location>
        <begin position="74"/>
        <end position="81"/>
    </location>
</feature>
<feature type="strand" evidence="14">
    <location>
        <begin position="86"/>
        <end position="89"/>
    </location>
</feature>
<feature type="strand" evidence="12">
    <location>
        <begin position="91"/>
        <end position="93"/>
    </location>
</feature>
<feature type="strand" evidence="14">
    <location>
        <begin position="95"/>
        <end position="97"/>
    </location>
</feature>
<feature type="helix" evidence="14">
    <location>
        <begin position="105"/>
        <end position="107"/>
    </location>
</feature>
<feature type="helix" evidence="14">
    <location>
        <begin position="110"/>
        <end position="118"/>
    </location>
</feature>
<feature type="helix" evidence="14">
    <location>
        <begin position="120"/>
        <end position="127"/>
    </location>
</feature>
<feature type="helix" evidence="14">
    <location>
        <begin position="136"/>
        <end position="146"/>
    </location>
</feature>
<feature type="helix" evidence="14">
    <location>
        <begin position="148"/>
        <end position="153"/>
    </location>
</feature>
<feature type="strand" evidence="14">
    <location>
        <begin position="156"/>
        <end position="159"/>
    </location>
</feature>
<feature type="helix" evidence="14">
    <location>
        <begin position="160"/>
        <end position="169"/>
    </location>
</feature>
<feature type="helix" evidence="14">
    <location>
        <begin position="176"/>
        <end position="179"/>
    </location>
</feature>
<feature type="helix" evidence="14">
    <location>
        <begin position="180"/>
        <end position="182"/>
    </location>
</feature>
<feature type="turn" evidence="14">
    <location>
        <begin position="187"/>
        <end position="189"/>
    </location>
</feature>
<feature type="strand" evidence="14">
    <location>
        <begin position="190"/>
        <end position="192"/>
    </location>
</feature>
<feature type="helix" evidence="14">
    <location>
        <begin position="194"/>
        <end position="200"/>
    </location>
</feature>
<feature type="helix" evidence="14">
    <location>
        <begin position="204"/>
        <end position="206"/>
    </location>
</feature>
<feature type="strand" evidence="14">
    <location>
        <begin position="216"/>
        <end position="221"/>
    </location>
</feature>
<feature type="strand" evidence="13">
    <location>
        <begin position="223"/>
        <end position="225"/>
    </location>
</feature>
<feature type="strand" evidence="14">
    <location>
        <begin position="227"/>
        <end position="231"/>
    </location>
</feature>
<feature type="helix" evidence="14">
    <location>
        <begin position="237"/>
        <end position="244"/>
    </location>
</feature>
<feature type="strand" evidence="14">
    <location>
        <begin position="252"/>
        <end position="269"/>
    </location>
</feature>
<feature type="helix" evidence="14">
    <location>
        <begin position="274"/>
        <end position="279"/>
    </location>
</feature>
<feature type="strand" evidence="14">
    <location>
        <begin position="282"/>
        <end position="284"/>
    </location>
</feature>
<feature type="helix" evidence="14">
    <location>
        <begin position="287"/>
        <end position="289"/>
    </location>
</feature>
<feature type="strand" evidence="14">
    <location>
        <begin position="291"/>
        <end position="297"/>
    </location>
</feature>
<feature type="helix" evidence="14">
    <location>
        <begin position="301"/>
        <end position="309"/>
    </location>
</feature>
<feature type="helix" evidence="14">
    <location>
        <begin position="315"/>
        <end position="322"/>
    </location>
</feature>
<feature type="strand" evidence="14">
    <location>
        <begin position="327"/>
        <end position="330"/>
    </location>
</feature>
<feature type="helix" evidence="14">
    <location>
        <begin position="337"/>
        <end position="339"/>
    </location>
</feature>
<feature type="helix" evidence="14">
    <location>
        <begin position="345"/>
        <end position="355"/>
    </location>
</feature>
<feature type="helix" evidence="14">
    <location>
        <begin position="364"/>
        <end position="390"/>
    </location>
</feature>
<feature type="strand" evidence="14">
    <location>
        <begin position="395"/>
        <end position="401"/>
    </location>
</feature>
<feature type="helix" evidence="14">
    <location>
        <begin position="402"/>
        <end position="405"/>
    </location>
</feature>
<feature type="helix" evidence="14">
    <location>
        <begin position="407"/>
        <end position="417"/>
    </location>
</feature>
<feature type="strand" evidence="14">
    <location>
        <begin position="419"/>
        <end position="423"/>
    </location>
</feature>
<feature type="helix" evidence="14">
    <location>
        <begin position="428"/>
        <end position="440"/>
    </location>
</feature>
<feature type="helix" evidence="14">
    <location>
        <begin position="447"/>
        <end position="455"/>
    </location>
</feature>
<feature type="strand" evidence="14">
    <location>
        <begin position="461"/>
        <end position="463"/>
    </location>
</feature>
<feature type="helix" evidence="14">
    <location>
        <begin position="470"/>
        <end position="479"/>
    </location>
</feature>
<dbReference type="EC" id="2.7.1.5" evidence="1 3 5"/>
<dbReference type="EMBL" id="X60472">
    <property type="protein sequence ID" value="CAA43001.1"/>
    <property type="status" value="ALT_FRAME"/>
    <property type="molecule type" value="Genomic_DNA"/>
</dbReference>
<dbReference type="EMBL" id="L19201">
    <property type="protein sequence ID" value="AAB03037.1"/>
    <property type="molecule type" value="Genomic_DNA"/>
</dbReference>
<dbReference type="EMBL" id="U00096">
    <property type="protein sequence ID" value="AAC76886.1"/>
    <property type="molecule type" value="Genomic_DNA"/>
</dbReference>
<dbReference type="EMBL" id="AP009048">
    <property type="protein sequence ID" value="BAE77405.1"/>
    <property type="molecule type" value="Genomic_DNA"/>
</dbReference>
<dbReference type="PIR" id="S40848">
    <property type="entry name" value="S40848"/>
</dbReference>
<dbReference type="RefSeq" id="NP_418340.1">
    <property type="nucleotide sequence ID" value="NC_000913.3"/>
</dbReference>
<dbReference type="RefSeq" id="WP_000144073.1">
    <property type="nucleotide sequence ID" value="NZ_SSZK01000014.1"/>
</dbReference>
<dbReference type="PDB" id="2CGJ">
    <property type="method" value="X-ray"/>
    <property type="resolution" value="2.26 A"/>
    <property type="chains" value="A=1-489"/>
</dbReference>
<dbReference type="PDB" id="2CGK">
    <property type="method" value="X-ray"/>
    <property type="resolution" value="2.46 A"/>
    <property type="chains" value="A/B=1-489"/>
</dbReference>
<dbReference type="PDB" id="2CGL">
    <property type="method" value="X-ray"/>
    <property type="resolution" value="1.88 A"/>
    <property type="chains" value="A=1-489"/>
</dbReference>
<dbReference type="PDBsum" id="2CGJ"/>
<dbReference type="PDBsum" id="2CGK"/>
<dbReference type="PDBsum" id="2CGL"/>
<dbReference type="SMR" id="P32171"/>
<dbReference type="BioGRID" id="4260677">
    <property type="interactions" value="3"/>
</dbReference>
<dbReference type="FunCoup" id="P32171">
    <property type="interactions" value="379"/>
</dbReference>
<dbReference type="IntAct" id="P32171">
    <property type="interactions" value="2"/>
</dbReference>
<dbReference type="STRING" id="511145.b3904"/>
<dbReference type="PaxDb" id="511145-b3904"/>
<dbReference type="EnsemblBacteria" id="AAC76886">
    <property type="protein sequence ID" value="AAC76886"/>
    <property type="gene ID" value="b3904"/>
</dbReference>
<dbReference type="GeneID" id="948399"/>
<dbReference type="KEGG" id="ecj:JW3875"/>
<dbReference type="KEGG" id="eco:b3904"/>
<dbReference type="KEGG" id="ecoc:C3026_21105"/>
<dbReference type="PATRIC" id="fig|1411691.4.peg.2802"/>
<dbReference type="EchoBASE" id="EB1814"/>
<dbReference type="eggNOG" id="COG1070">
    <property type="taxonomic scope" value="Bacteria"/>
</dbReference>
<dbReference type="HOGENOM" id="CLU_039395_0_0_6"/>
<dbReference type="InParanoid" id="P32171"/>
<dbReference type="OMA" id="HYRDART"/>
<dbReference type="OrthoDB" id="9761504at2"/>
<dbReference type="PhylomeDB" id="P32171"/>
<dbReference type="BioCyc" id="EcoCyc:RHAMNULOKIN-MONOMER"/>
<dbReference type="BioCyc" id="MetaCyc:RHAMNULOKIN-MONOMER"/>
<dbReference type="BRENDA" id="2.7.1.5">
    <property type="organism ID" value="2026"/>
</dbReference>
<dbReference type="UniPathway" id="UPA00541">
    <property type="reaction ID" value="UER00602"/>
</dbReference>
<dbReference type="EvolutionaryTrace" id="P32171"/>
<dbReference type="PRO" id="PR:P32171"/>
<dbReference type="Proteomes" id="UP000000625">
    <property type="component" value="Chromosome"/>
</dbReference>
<dbReference type="GO" id="GO:0005829">
    <property type="term" value="C:cytosol"/>
    <property type="evidence" value="ECO:0000318"/>
    <property type="project" value="GO_Central"/>
</dbReference>
<dbReference type="GO" id="GO:0005524">
    <property type="term" value="F:ATP binding"/>
    <property type="evidence" value="ECO:0000314"/>
    <property type="project" value="UniProtKB"/>
</dbReference>
<dbReference type="GO" id="GO:0004370">
    <property type="term" value="F:glycerol kinase activity"/>
    <property type="evidence" value="ECO:0000318"/>
    <property type="project" value="GO_Central"/>
</dbReference>
<dbReference type="GO" id="GO:0008993">
    <property type="term" value="F:rhamnulokinase activity"/>
    <property type="evidence" value="ECO:0000314"/>
    <property type="project" value="UniProtKB"/>
</dbReference>
<dbReference type="GO" id="GO:0019301">
    <property type="term" value="P:rhamnose catabolic process"/>
    <property type="evidence" value="ECO:0000314"/>
    <property type="project" value="UniProtKB"/>
</dbReference>
<dbReference type="CDD" id="cd07771">
    <property type="entry name" value="ASKHA_NBD_FGGY_RhaB-like"/>
    <property type="match status" value="1"/>
</dbReference>
<dbReference type="FunFam" id="3.30.420.40:FF:000064">
    <property type="entry name" value="Rhamnulokinase"/>
    <property type="match status" value="1"/>
</dbReference>
<dbReference type="FunFam" id="3.30.420.40:FF:000073">
    <property type="entry name" value="Rhamnulokinase"/>
    <property type="match status" value="1"/>
</dbReference>
<dbReference type="Gene3D" id="3.30.420.40">
    <property type="match status" value="2"/>
</dbReference>
<dbReference type="HAMAP" id="MF_01535">
    <property type="entry name" value="Rhamnulokinase"/>
    <property type="match status" value="1"/>
</dbReference>
<dbReference type="InterPro" id="IPR043129">
    <property type="entry name" value="ATPase_NBD"/>
</dbReference>
<dbReference type="InterPro" id="IPR018485">
    <property type="entry name" value="FGGY_C"/>
</dbReference>
<dbReference type="InterPro" id="IPR018484">
    <property type="entry name" value="FGGY_N"/>
</dbReference>
<dbReference type="InterPro" id="IPR013449">
    <property type="entry name" value="Rhamnulokinase"/>
</dbReference>
<dbReference type="NCBIfam" id="NF007925">
    <property type="entry name" value="PRK10640.1"/>
    <property type="match status" value="1"/>
</dbReference>
<dbReference type="NCBIfam" id="TIGR02627">
    <property type="entry name" value="rhamnulo_kin"/>
    <property type="match status" value="1"/>
</dbReference>
<dbReference type="PANTHER" id="PTHR10196:SF93">
    <property type="entry name" value="L-RHAMNULOKINASE"/>
    <property type="match status" value="1"/>
</dbReference>
<dbReference type="PANTHER" id="PTHR10196">
    <property type="entry name" value="SUGAR KINASE"/>
    <property type="match status" value="1"/>
</dbReference>
<dbReference type="Pfam" id="PF02782">
    <property type="entry name" value="FGGY_C"/>
    <property type="match status" value="1"/>
</dbReference>
<dbReference type="Pfam" id="PF00370">
    <property type="entry name" value="FGGY_N"/>
    <property type="match status" value="1"/>
</dbReference>
<dbReference type="SUPFAM" id="SSF53067">
    <property type="entry name" value="Actin-like ATPase domain"/>
    <property type="match status" value="2"/>
</dbReference>
<comment type="function">
    <text evidence="1 3 5 6">Involved in the catabolism of L-rhamnose (6-deoxy-L-mannose). It could also play a role in the metabolism of some rare sugars such as L-fructose. Catalyzes the transfer of the gamma-phosphate group from ATP to the 1-hydroxyl group of L-rhamnulose to yield L-rhamnulose 1-phosphate. Uridine triphosphate (UTP), cytidine 5-triphosphate (CTP), guanosine 5-triphosphate (GTP), and thymidine triphosphate (TTP) also can act as phosphoryl donors. It can also phosphorylate L-fuculose and L-xylulose.</text>
</comment>
<comment type="catalytic activity">
    <reaction evidence="1 3 5">
        <text>L-rhamnulose + ATP = L-rhamnulose 1-phosphate + ADP + H(+)</text>
        <dbReference type="Rhea" id="RHEA:20117"/>
        <dbReference type="ChEBI" id="CHEBI:15378"/>
        <dbReference type="ChEBI" id="CHEBI:17897"/>
        <dbReference type="ChEBI" id="CHEBI:30616"/>
        <dbReference type="ChEBI" id="CHEBI:58313"/>
        <dbReference type="ChEBI" id="CHEBI:456216"/>
        <dbReference type="EC" id="2.7.1.5"/>
    </reaction>
</comment>
<comment type="cofactor">
    <cofactor evidence="1 3">
        <name>Mg(2+)</name>
        <dbReference type="ChEBI" id="CHEBI:18420"/>
    </cofactor>
    <text evidence="3">It can also use manganese, cobalt, iron, calcium and copper ions.</text>
</comment>
<comment type="biophysicochemical properties">
    <kinetics>
        <KM evidence="3">82 uM for L-rhamnulose (at pH 8.5 and 37 degrees Celsius)</KM>
        <KM evidence="3">110 uM for ATP (at pH 8.5 and 37 degrees Celsius)</KM>
        <KM evidence="3">270 uM for magnesium ion (at pH 8.5 and 37 degrees Celsius)</KM>
        <KM evidence="5">3 mM for beta-L-fructose (at pH 8)</KM>
    </kinetics>
    <phDependence>
        <text evidence="3">Optimum pH is 8.5.</text>
    </phDependence>
</comment>
<comment type="pathway">
    <text evidence="1">Carbohydrate degradation; L-rhamnose degradation; glycerone phosphate from L-rhamnose: step 2/3.</text>
</comment>
<comment type="subunit">
    <text evidence="1 5">Monomer.</text>
</comment>
<comment type="induction">
    <text evidence="2 4 7">Induced by L-rhamnose via the RhaR-RhaS regulatory cascade. Binding of the cAMP receptor protein (CRP) is required for full expression. Also induced by L-lyxose.</text>
</comment>
<comment type="disruption phenotype">
    <text evidence="6">Cells lacking this gene are unable to utilize rhamnose as a source of carbon.</text>
</comment>
<comment type="similarity">
    <text evidence="1">Belongs to the rhamnulokinase family.</text>
</comment>
<comment type="sequence caution" evidence="11">
    <conflict type="frameshift">
        <sequence resource="EMBL-CDS" id="CAA43001"/>
    </conflict>
</comment>
<proteinExistence type="evidence at protein level"/>
<keyword id="KW-0002">3D-structure</keyword>
<keyword id="KW-0067">ATP-binding</keyword>
<keyword id="KW-1015">Disulfide bond</keyword>
<keyword id="KW-0418">Kinase</keyword>
<keyword id="KW-0460">Magnesium</keyword>
<keyword id="KW-0547">Nucleotide-binding</keyword>
<keyword id="KW-1185">Reference proteome</keyword>
<keyword id="KW-0684">Rhamnose metabolism</keyword>
<keyword id="KW-0808">Transferase</keyword>
<gene>
    <name evidence="1 10" type="primary">rhaB</name>
    <name type="ordered locus">b3904</name>
    <name type="ordered locus">JW3875</name>
</gene>
<organism>
    <name type="scientific">Escherichia coli (strain K12)</name>
    <dbReference type="NCBI Taxonomy" id="83333"/>
    <lineage>
        <taxon>Bacteria</taxon>
        <taxon>Pseudomonadati</taxon>
        <taxon>Pseudomonadota</taxon>
        <taxon>Gammaproteobacteria</taxon>
        <taxon>Enterobacterales</taxon>
        <taxon>Enterobacteriaceae</taxon>
        <taxon>Escherichia</taxon>
    </lineage>
</organism>